<proteinExistence type="evidence at protein level"/>
<comment type="interaction">
    <interactant intactId="EBI-744506">
        <id>Q86V42</id>
    </interactant>
    <interactant intactId="EBI-739624">
        <id>Q8NHQ1</id>
        <label>CEP70</label>
    </interactant>
    <organismsDiffer>false</organismsDiffer>
    <experiments>3</experiments>
</comment>
<comment type="interaction">
    <interactant intactId="EBI-744506">
        <id>Q86V42</id>
    </interactant>
    <interactant intactId="EBI-723153">
        <id>Q9UFW8</id>
        <label>CGGBP1</label>
    </interactant>
    <organismsDiffer>false</organismsDiffer>
    <experiments>3</experiments>
</comment>
<comment type="interaction">
    <interactant intactId="EBI-744506">
        <id>Q86V42</id>
    </interactant>
    <interactant intactId="EBI-10174653">
        <id>Q8NF50-2</id>
        <label>DOCK8</label>
    </interactant>
    <organismsDiffer>false</organismsDiffer>
    <experiments>3</experiments>
</comment>
<comment type="interaction">
    <interactant intactId="EBI-744506">
        <id>Q86V42</id>
    </interactant>
    <interactant intactId="EBI-983612">
        <id>O15409</id>
        <label>FOXP2</label>
    </interactant>
    <organismsDiffer>false</organismsDiffer>
    <experiments>3</experiments>
</comment>
<comment type="interaction">
    <interactant intactId="EBI-744506">
        <id>Q86V42</id>
    </interactant>
    <interactant intactId="EBI-8638439">
        <id>Q8IYA8</id>
        <label>IHO1</label>
    </interactant>
    <organismsDiffer>false</organismsDiffer>
    <experiments>3</experiments>
</comment>
<comment type="interaction">
    <interactant intactId="EBI-744506">
        <id>Q86V42</id>
    </interactant>
    <interactant intactId="EBI-17178971">
        <id>Q14005-2</id>
        <label>IL16</label>
    </interactant>
    <organismsDiffer>false</organismsDiffer>
    <experiments>7</experiments>
</comment>
<comment type="interaction">
    <interactant intactId="EBI-744506">
        <id>Q86V42</id>
    </interactant>
    <interactant intactId="EBI-769401">
        <id>Q8NBZ0</id>
        <label>INO80E</label>
    </interactant>
    <organismsDiffer>false</organismsDiffer>
    <experiments>3</experiments>
</comment>
<comment type="interaction">
    <interactant intactId="EBI-744506">
        <id>Q86V42</id>
    </interactant>
    <interactant intactId="EBI-2125614">
        <id>Q9BVG8</id>
        <label>KIFC3</label>
    </interactant>
    <organismsDiffer>false</organismsDiffer>
    <experiments>3</experiments>
</comment>
<comment type="interaction">
    <interactant intactId="EBI-744506">
        <id>Q86V42</id>
    </interactant>
    <interactant intactId="EBI-739832">
        <id>Q8TBB1</id>
        <label>LNX1</label>
    </interactant>
    <organismsDiffer>false</organismsDiffer>
    <experiments>3</experiments>
</comment>
<comment type="interaction">
    <interactant intactId="EBI-744506">
        <id>Q86V42</id>
    </interactant>
    <interactant intactId="EBI-713635">
        <id>O43639</id>
        <label>NCK2</label>
    </interactant>
    <organismsDiffer>false</organismsDiffer>
    <experiments>3</experiments>
</comment>
<comment type="interaction">
    <interactant intactId="EBI-744506">
        <id>Q86V42</id>
    </interactant>
    <interactant intactId="EBI-713786">
        <id>Q8IXK0</id>
        <label>PHC2</label>
    </interactant>
    <organismsDiffer>false</organismsDiffer>
    <experiments>3</experiments>
</comment>
<comment type="interaction">
    <interactant intactId="EBI-744506">
        <id>Q86V42</id>
    </interactant>
    <interactant intactId="EBI-3952014">
        <id>Q13976</id>
        <label>PRKG1</label>
    </interactant>
    <organismsDiffer>false</organismsDiffer>
    <experiments>4</experiments>
</comment>
<comment type="interaction">
    <interactant intactId="EBI-744506">
        <id>Q86V42</id>
    </interactant>
    <interactant intactId="EBI-747844">
        <id>Q96QF0</id>
        <label>RAB3IP</label>
    </interactant>
    <organismsDiffer>false</organismsDiffer>
    <experiments>3</experiments>
</comment>
<comment type="interaction">
    <interactant intactId="EBI-744506">
        <id>Q86V42</id>
    </interactant>
    <interactant intactId="EBI-876651">
        <id>Q13464</id>
        <label>ROCK1</label>
    </interactant>
    <organismsDiffer>false</organismsDiffer>
    <experiments>3</experiments>
</comment>
<comment type="interaction">
    <interactant intactId="EBI-744506">
        <id>Q86V42</id>
    </interactant>
    <interactant intactId="EBI-3957636">
        <id>Q8IYX7</id>
        <label>SAXO1</label>
    </interactant>
    <organismsDiffer>false</organismsDiffer>
    <experiments>3</experiments>
</comment>
<comment type="interaction">
    <interactant intactId="EBI-744506">
        <id>Q86V42</id>
    </interactant>
    <interactant intactId="EBI-745680">
        <id>Q96MF2</id>
        <label>STAC3</label>
    </interactant>
    <organismsDiffer>false</organismsDiffer>
    <experiments>3</experiments>
</comment>
<comment type="interaction">
    <interactant intactId="EBI-744506">
        <id>Q86V42</id>
    </interactant>
    <interactant intactId="EBI-741515">
        <id>Q9NVV9</id>
        <label>THAP1</label>
    </interactant>
    <organismsDiffer>false</organismsDiffer>
    <experiments>3</experiments>
</comment>
<comment type="interaction">
    <interactant intactId="EBI-744506">
        <id>Q86V42</id>
    </interactant>
    <interactant intactId="EBI-717810">
        <id>Q08117</id>
        <label>TLE5</label>
    </interactant>
    <organismsDiffer>false</organismsDiffer>
    <experiments>3</experiments>
</comment>
<comment type="interaction">
    <interactant intactId="EBI-744506">
        <id>Q86V42</id>
    </interactant>
    <interactant intactId="EBI-725997">
        <id>Q8WV44</id>
        <label>TRIM41</label>
    </interactant>
    <organismsDiffer>false</organismsDiffer>
    <experiments>3</experiments>
</comment>
<comment type="interaction">
    <interactant intactId="EBI-744506">
        <id>Q86V42</id>
    </interactant>
    <interactant intactId="EBI-2130429">
        <id>Q9BYV2</id>
        <label>TRIM54</label>
    </interactant>
    <organismsDiffer>false</organismsDiffer>
    <experiments>3</experiments>
</comment>
<comment type="interaction">
    <interactant intactId="EBI-744506">
        <id>Q86V42</id>
    </interactant>
    <interactant intactId="EBI-5658292">
        <id>Q8NCP5</id>
        <label>ZBTB44</label>
    </interactant>
    <organismsDiffer>false</organismsDiffer>
    <experiments>3</experiments>
</comment>
<comment type="interaction">
    <interactant intactId="EBI-744506">
        <id>Q86V42</id>
    </interactant>
    <interactant intactId="EBI-711679">
        <id>Q9NTW7</id>
        <label>ZFP64</label>
    </interactant>
    <organismsDiffer>false</organismsDiffer>
    <experiments>6</experiments>
</comment>
<comment type="interaction">
    <interactant intactId="EBI-744506">
        <id>Q86V42</id>
    </interactant>
    <interactant intactId="EBI-10186058">
        <id>Q53Z40</id>
        <label>ZNF165</label>
    </interactant>
    <organismsDiffer>false</organismsDiffer>
    <experiments>3</experiments>
</comment>
<comment type="interaction">
    <interactant intactId="EBI-744506">
        <id>Q86V42</id>
    </interactant>
    <interactant intactId="EBI-10177272">
        <id>P15622-3</id>
        <label>ZNF250</label>
    </interactant>
    <organismsDiffer>false</organismsDiffer>
    <experiments>3</experiments>
</comment>
<comment type="interaction">
    <interactant intactId="EBI-744506">
        <id>Q86V42</id>
    </interactant>
    <interactant intactId="EBI-2795524">
        <id>Q8IYH5</id>
        <label>ZZZ3</label>
    </interactant>
    <organismsDiffer>false</organismsDiffer>
    <experiments>3</experiments>
</comment>
<comment type="alternative products">
    <event type="alternative splicing"/>
    <isoform>
        <id>Q86V42-1</id>
        <name>1</name>
        <sequence type="displayed"/>
    </isoform>
    <isoform>
        <id>Q86V42-2</id>
        <name>2</name>
        <sequence type="described" ref="VSP_025039"/>
    </isoform>
    <isoform>
        <id>Q86V42-3</id>
        <name>3</name>
        <sequence type="described" ref="VSP_025040 VSP_025041"/>
    </isoform>
</comment>
<comment type="similarity">
    <text evidence="4">Belongs to the FAM124 family.</text>
</comment>
<comment type="sequence caution" evidence="4">
    <conflict type="frameshift">
        <sequence resource="EMBL-CDS" id="AAH34497"/>
    </conflict>
</comment>
<dbReference type="EMBL" id="AK055269">
    <property type="protein sequence ID" value="BAB70894.1"/>
    <property type="molecule type" value="mRNA"/>
</dbReference>
<dbReference type="EMBL" id="AK096364">
    <property type="protein sequence ID" value="BAC04769.1"/>
    <property type="molecule type" value="mRNA"/>
</dbReference>
<dbReference type="EMBL" id="AL157817">
    <property type="status" value="NOT_ANNOTATED_CDS"/>
    <property type="molecule type" value="Genomic_DNA"/>
</dbReference>
<dbReference type="EMBL" id="BC034497">
    <property type="protein sequence ID" value="AAH34497.1"/>
    <property type="status" value="ALT_FRAME"/>
    <property type="molecule type" value="mRNA"/>
</dbReference>
<dbReference type="EMBL" id="BC051771">
    <property type="protein sequence ID" value="AAH51771.1"/>
    <property type="molecule type" value="mRNA"/>
</dbReference>
<dbReference type="CCDS" id="CCDS55900.1">
    <molecule id="Q86V42-1"/>
</dbReference>
<dbReference type="CCDS" id="CCDS81767.1">
    <molecule id="Q86V42-3"/>
</dbReference>
<dbReference type="CCDS" id="CCDS9427.1">
    <molecule id="Q86V42-2"/>
</dbReference>
<dbReference type="RefSeq" id="NP_001229241.1">
    <molecule id="Q86V42-1"/>
    <property type="nucleotide sequence ID" value="NM_001242312.2"/>
</dbReference>
<dbReference type="RefSeq" id="NP_001317451.1">
    <molecule id="Q86V42-3"/>
    <property type="nucleotide sequence ID" value="NM_001330522.2"/>
</dbReference>
<dbReference type="RefSeq" id="NP_659456.3">
    <molecule id="Q86V42-2"/>
    <property type="nucleotide sequence ID" value="NM_145019.3"/>
</dbReference>
<dbReference type="SMR" id="Q86V42"/>
<dbReference type="BioGRID" id="128629">
    <property type="interactions" value="54"/>
</dbReference>
<dbReference type="FunCoup" id="Q86V42">
    <property type="interactions" value="41"/>
</dbReference>
<dbReference type="IntAct" id="Q86V42">
    <property type="interactions" value="47"/>
</dbReference>
<dbReference type="MINT" id="Q86V42"/>
<dbReference type="STRING" id="9606.ENSP00000280057"/>
<dbReference type="GlyCosmos" id="Q86V42">
    <property type="glycosylation" value="1 site, 1 glycan"/>
</dbReference>
<dbReference type="GlyGen" id="Q86V42">
    <property type="glycosylation" value="2 sites, 1 O-linked glycan (1 site)"/>
</dbReference>
<dbReference type="iPTMnet" id="Q86V42"/>
<dbReference type="PhosphoSitePlus" id="Q86V42"/>
<dbReference type="BioMuta" id="FAM124A"/>
<dbReference type="DMDM" id="74750447"/>
<dbReference type="jPOST" id="Q86V42"/>
<dbReference type="MassIVE" id="Q86V42"/>
<dbReference type="PaxDb" id="9606-ENSP00000280057"/>
<dbReference type="PeptideAtlas" id="Q86V42"/>
<dbReference type="ProteomicsDB" id="69963">
    <molecule id="Q86V42-1"/>
</dbReference>
<dbReference type="ProteomicsDB" id="69964">
    <molecule id="Q86V42-2"/>
</dbReference>
<dbReference type="ProteomicsDB" id="69965">
    <molecule id="Q86V42-3"/>
</dbReference>
<dbReference type="TopDownProteomics" id="Q86V42-2">
    <molecule id="Q86V42-2"/>
</dbReference>
<dbReference type="Antibodypedia" id="24063">
    <property type="antibodies" value="77 antibodies from 16 providers"/>
</dbReference>
<dbReference type="DNASU" id="220108"/>
<dbReference type="Ensembl" id="ENST00000280057.6">
    <molecule id="Q86V42-2"/>
    <property type="protein sequence ID" value="ENSP00000280057.6"/>
    <property type="gene ID" value="ENSG00000150510.17"/>
</dbReference>
<dbReference type="Ensembl" id="ENST00000322475.13">
    <molecule id="Q86V42-1"/>
    <property type="protein sequence ID" value="ENSP00000324625.8"/>
    <property type="gene ID" value="ENSG00000150510.17"/>
</dbReference>
<dbReference type="Ensembl" id="ENST00000615498.4">
    <molecule id="Q86V42-3"/>
    <property type="protein sequence ID" value="ENSP00000481212.1"/>
    <property type="gene ID" value="ENSG00000150510.17"/>
</dbReference>
<dbReference type="GeneID" id="220108"/>
<dbReference type="KEGG" id="hsa:220108"/>
<dbReference type="MANE-Select" id="ENST00000322475.13">
    <property type="protein sequence ID" value="ENSP00000324625.8"/>
    <property type="RefSeq nucleotide sequence ID" value="NM_001242312.2"/>
    <property type="RefSeq protein sequence ID" value="NP_001229241.1"/>
</dbReference>
<dbReference type="UCSC" id="uc001vfe.4">
    <molecule id="Q86V42-1"/>
    <property type="organism name" value="human"/>
</dbReference>
<dbReference type="AGR" id="HGNC:26413"/>
<dbReference type="CTD" id="220108"/>
<dbReference type="DisGeNET" id="220108"/>
<dbReference type="GeneCards" id="FAM124A"/>
<dbReference type="HGNC" id="HGNC:26413">
    <property type="gene designation" value="FAM124A"/>
</dbReference>
<dbReference type="HPA" id="ENSG00000150510">
    <property type="expression patterns" value="Tissue enhanced (brain, choroid plexus, retina)"/>
</dbReference>
<dbReference type="neXtProt" id="NX_Q86V42"/>
<dbReference type="OpenTargets" id="ENSG00000150510"/>
<dbReference type="PharmGKB" id="PA162385800"/>
<dbReference type="VEuPathDB" id="HostDB:ENSG00000150510"/>
<dbReference type="eggNOG" id="ENOG502QUA8">
    <property type="taxonomic scope" value="Eukaryota"/>
</dbReference>
<dbReference type="GeneTree" id="ENSGT00590000083134"/>
<dbReference type="HOGENOM" id="CLU_037215_0_0_1"/>
<dbReference type="InParanoid" id="Q86V42"/>
<dbReference type="OMA" id="DVRWQTE"/>
<dbReference type="OrthoDB" id="10023686at2759"/>
<dbReference type="PAN-GO" id="Q86V42">
    <property type="GO annotations" value="0 GO annotations based on evolutionary models"/>
</dbReference>
<dbReference type="PhylomeDB" id="Q86V42"/>
<dbReference type="TreeFam" id="TF328699"/>
<dbReference type="PathwayCommons" id="Q86V42"/>
<dbReference type="SignaLink" id="Q86V42"/>
<dbReference type="BioGRID-ORCS" id="220108">
    <property type="hits" value="11 hits in 1142 CRISPR screens"/>
</dbReference>
<dbReference type="ChiTaRS" id="FAM124A">
    <property type="organism name" value="human"/>
</dbReference>
<dbReference type="GenomeRNAi" id="220108"/>
<dbReference type="Pharos" id="Q86V42">
    <property type="development level" value="Tdark"/>
</dbReference>
<dbReference type="PRO" id="PR:Q86V42"/>
<dbReference type="Proteomes" id="UP000005640">
    <property type="component" value="Chromosome 13"/>
</dbReference>
<dbReference type="RNAct" id="Q86V42">
    <property type="molecule type" value="protein"/>
</dbReference>
<dbReference type="Bgee" id="ENSG00000150510">
    <property type="expression patterns" value="Expressed in inferior vagus X ganglion and 154 other cell types or tissues"/>
</dbReference>
<dbReference type="InterPro" id="IPR029380">
    <property type="entry name" value="FAM124"/>
</dbReference>
<dbReference type="InterPro" id="IPR046365">
    <property type="entry name" value="FAM124_dom"/>
</dbReference>
<dbReference type="PANTHER" id="PTHR14715">
    <property type="entry name" value="FAM124 DOMAIN-CONTAINING PROTEIN-RELATED"/>
    <property type="match status" value="1"/>
</dbReference>
<dbReference type="PANTHER" id="PTHR14715:SF4">
    <property type="entry name" value="PROTEIN FAM124A"/>
    <property type="match status" value="1"/>
</dbReference>
<dbReference type="Pfam" id="PF15067">
    <property type="entry name" value="FAM124"/>
    <property type="match status" value="1"/>
</dbReference>
<protein>
    <recommendedName>
        <fullName>Protein FAM124A</fullName>
    </recommendedName>
</protein>
<feature type="chain" id="PRO_0000286380" description="Protein FAM124A">
    <location>
        <begin position="1"/>
        <end position="546"/>
    </location>
</feature>
<feature type="region of interest" description="Disordered" evidence="1">
    <location>
        <begin position="1"/>
        <end position="37"/>
    </location>
</feature>
<feature type="region of interest" description="Disordered" evidence="1">
    <location>
        <begin position="286"/>
        <end position="360"/>
    </location>
</feature>
<feature type="region of interest" description="Disordered" evidence="1">
    <location>
        <begin position="488"/>
        <end position="546"/>
    </location>
</feature>
<feature type="compositionally biased region" description="Low complexity" evidence="1">
    <location>
        <begin position="24"/>
        <end position="36"/>
    </location>
</feature>
<feature type="compositionally biased region" description="Basic residues" evidence="1">
    <location>
        <begin position="286"/>
        <end position="302"/>
    </location>
</feature>
<feature type="compositionally biased region" description="Polar residues" evidence="1">
    <location>
        <begin position="304"/>
        <end position="324"/>
    </location>
</feature>
<feature type="compositionally biased region" description="Polar residues" evidence="1">
    <location>
        <begin position="347"/>
        <end position="360"/>
    </location>
</feature>
<feature type="compositionally biased region" description="Low complexity" evidence="1">
    <location>
        <begin position="488"/>
        <end position="511"/>
    </location>
</feature>
<feature type="splice variant" id="VSP_025039" description="In isoform 2." evidence="2">
    <original>S</original>
    <variation>NGFSTWRMPCCLFLYCTHGDKEKGRWSLQVEHTWPSG</variation>
    <location>
        <position position="34"/>
    </location>
</feature>
<feature type="splice variant" id="VSP_025040" description="In isoform 3." evidence="3">
    <original>AQRVHKKFPKPGRVHHASEKKRH</original>
    <variation>VLGGRLSVCLGDLRNQLALPQTL</variation>
    <location>
        <begin position="279"/>
        <end position="301"/>
    </location>
</feature>
<feature type="splice variant" id="VSP_025041" description="In isoform 3." evidence="3">
    <location>
        <begin position="302"/>
        <end position="546"/>
    </location>
</feature>
<feature type="sequence variant" id="VAR_032098" description="In dbSNP:rs17075482.">
    <original>D</original>
    <variation>H</variation>
    <location>
        <position position="181"/>
    </location>
</feature>
<feature type="sequence conflict" description="In Ref. 1; BAC04769." evidence="4" ref="1">
    <original>S</original>
    <variation>N</variation>
    <location>
        <position position="197"/>
    </location>
</feature>
<feature type="sequence conflict" description="In Ref. 1; BAB70894." evidence="4" ref="1">
    <original>G</original>
    <variation>R</variation>
    <location>
        <position position="272"/>
    </location>
</feature>
<sequence length="546" mass="60104">MDPKAGGGGEEDDCVDSGAETGGSDYSHLSSTSSELSVEEAQDPFLVSIHIIADPGESQPLQEAIDNVLAWIHPDLPLFRVSERRASRRRRKPPKGAQPALAVVLFLQEEYGEEQILQLHRTLQQPPWRHHHTEQVHGRFLPYLPCSQDFFTLAPGTPLWAIRPVHYGKEIVRFTVYCRYDNYADSLRFYQLILRRSPSQKKADFCIFPIFSNLDVDIQFSLKRLPCDQCPVPTDSSVLEFRVRDIGELVPLLPNPCSPISEGRWQTEDHDGNKILLQAQRVHKKFPKPGRVHHASEKKRHSTPLPSTAVPSHTPGSSQQSPLNSPHPGPIRTGLPPGHQQEFAGRANSTPNPPWSFQRSKSLFCLPTGGPSLASSAEPQWFSNTGAPGHRASEWRHGHLLSIDDLEGAQETDVDTGLRLSSSDLSVVSAYSAPSRFCSTVETPLPSERCSSHWAAHKDSREGPLPTVSRVTTEASWASLPFFTKRSSSSSATARAAPPAPSTSTLTDSSPQLPCDTPKVKQTDGDMPPPPGSAGPGDNDMEEFYI</sequence>
<name>F124A_HUMAN</name>
<gene>
    <name type="primary">FAM124A</name>
</gene>
<reference key="1">
    <citation type="journal article" date="2004" name="Nat. Genet.">
        <title>Complete sequencing and characterization of 21,243 full-length human cDNAs.</title>
        <authorList>
            <person name="Ota T."/>
            <person name="Suzuki Y."/>
            <person name="Nishikawa T."/>
            <person name="Otsuki T."/>
            <person name="Sugiyama T."/>
            <person name="Irie R."/>
            <person name="Wakamatsu A."/>
            <person name="Hayashi K."/>
            <person name="Sato H."/>
            <person name="Nagai K."/>
            <person name="Kimura K."/>
            <person name="Makita H."/>
            <person name="Sekine M."/>
            <person name="Obayashi M."/>
            <person name="Nishi T."/>
            <person name="Shibahara T."/>
            <person name="Tanaka T."/>
            <person name="Ishii S."/>
            <person name="Yamamoto J."/>
            <person name="Saito K."/>
            <person name="Kawai Y."/>
            <person name="Isono Y."/>
            <person name="Nakamura Y."/>
            <person name="Nagahari K."/>
            <person name="Murakami K."/>
            <person name="Yasuda T."/>
            <person name="Iwayanagi T."/>
            <person name="Wagatsuma M."/>
            <person name="Shiratori A."/>
            <person name="Sudo H."/>
            <person name="Hosoiri T."/>
            <person name="Kaku Y."/>
            <person name="Kodaira H."/>
            <person name="Kondo H."/>
            <person name="Sugawara M."/>
            <person name="Takahashi M."/>
            <person name="Kanda K."/>
            <person name="Yokoi T."/>
            <person name="Furuya T."/>
            <person name="Kikkawa E."/>
            <person name="Omura Y."/>
            <person name="Abe K."/>
            <person name="Kamihara K."/>
            <person name="Katsuta N."/>
            <person name="Sato K."/>
            <person name="Tanikawa M."/>
            <person name="Yamazaki M."/>
            <person name="Ninomiya K."/>
            <person name="Ishibashi T."/>
            <person name="Yamashita H."/>
            <person name="Murakawa K."/>
            <person name="Fujimori K."/>
            <person name="Tanai H."/>
            <person name="Kimata M."/>
            <person name="Watanabe M."/>
            <person name="Hiraoka S."/>
            <person name="Chiba Y."/>
            <person name="Ishida S."/>
            <person name="Ono Y."/>
            <person name="Takiguchi S."/>
            <person name="Watanabe S."/>
            <person name="Yosida M."/>
            <person name="Hotuta T."/>
            <person name="Kusano J."/>
            <person name="Kanehori K."/>
            <person name="Takahashi-Fujii A."/>
            <person name="Hara H."/>
            <person name="Tanase T.-O."/>
            <person name="Nomura Y."/>
            <person name="Togiya S."/>
            <person name="Komai F."/>
            <person name="Hara R."/>
            <person name="Takeuchi K."/>
            <person name="Arita M."/>
            <person name="Imose N."/>
            <person name="Musashino K."/>
            <person name="Yuuki H."/>
            <person name="Oshima A."/>
            <person name="Sasaki N."/>
            <person name="Aotsuka S."/>
            <person name="Yoshikawa Y."/>
            <person name="Matsunawa H."/>
            <person name="Ichihara T."/>
            <person name="Shiohata N."/>
            <person name="Sano S."/>
            <person name="Moriya S."/>
            <person name="Momiyama H."/>
            <person name="Satoh N."/>
            <person name="Takami S."/>
            <person name="Terashima Y."/>
            <person name="Suzuki O."/>
            <person name="Nakagawa S."/>
            <person name="Senoh A."/>
            <person name="Mizoguchi H."/>
            <person name="Goto Y."/>
            <person name="Shimizu F."/>
            <person name="Wakebe H."/>
            <person name="Hishigaki H."/>
            <person name="Watanabe T."/>
            <person name="Sugiyama A."/>
            <person name="Takemoto M."/>
            <person name="Kawakami B."/>
            <person name="Yamazaki M."/>
            <person name="Watanabe K."/>
            <person name="Kumagai A."/>
            <person name="Itakura S."/>
            <person name="Fukuzumi Y."/>
            <person name="Fujimori Y."/>
            <person name="Komiyama M."/>
            <person name="Tashiro H."/>
            <person name="Tanigami A."/>
            <person name="Fujiwara T."/>
            <person name="Ono T."/>
            <person name="Yamada K."/>
            <person name="Fujii Y."/>
            <person name="Ozaki K."/>
            <person name="Hirao M."/>
            <person name="Ohmori Y."/>
            <person name="Kawabata A."/>
            <person name="Hikiji T."/>
            <person name="Kobatake N."/>
            <person name="Inagaki H."/>
            <person name="Ikema Y."/>
            <person name="Okamoto S."/>
            <person name="Okitani R."/>
            <person name="Kawakami T."/>
            <person name="Noguchi S."/>
            <person name="Itoh T."/>
            <person name="Shigeta K."/>
            <person name="Senba T."/>
            <person name="Matsumura K."/>
            <person name="Nakajima Y."/>
            <person name="Mizuno T."/>
            <person name="Morinaga M."/>
            <person name="Sasaki M."/>
            <person name="Togashi T."/>
            <person name="Oyama M."/>
            <person name="Hata H."/>
            <person name="Watanabe M."/>
            <person name="Komatsu T."/>
            <person name="Mizushima-Sugano J."/>
            <person name="Satoh T."/>
            <person name="Shirai Y."/>
            <person name="Takahashi Y."/>
            <person name="Nakagawa K."/>
            <person name="Okumura K."/>
            <person name="Nagase T."/>
            <person name="Nomura N."/>
            <person name="Kikuchi H."/>
            <person name="Masuho Y."/>
            <person name="Yamashita R."/>
            <person name="Nakai K."/>
            <person name="Yada T."/>
            <person name="Nakamura Y."/>
            <person name="Ohara O."/>
            <person name="Isogai T."/>
            <person name="Sugano S."/>
        </authorList>
    </citation>
    <scope>NUCLEOTIDE SEQUENCE [LARGE SCALE MRNA] (ISOFORMS 1 AND 2)</scope>
    <source>
        <tissue>Fetal brain</tissue>
        <tissue>Teratocarcinoma</tissue>
    </source>
</reference>
<reference key="2">
    <citation type="journal article" date="2004" name="Nature">
        <title>The DNA sequence and analysis of human chromosome 13.</title>
        <authorList>
            <person name="Dunham A."/>
            <person name="Matthews L.H."/>
            <person name="Burton J."/>
            <person name="Ashurst J.L."/>
            <person name="Howe K.L."/>
            <person name="Ashcroft K.J."/>
            <person name="Beare D.M."/>
            <person name="Burford D.C."/>
            <person name="Hunt S.E."/>
            <person name="Griffiths-Jones S."/>
            <person name="Jones M.C."/>
            <person name="Keenan S.J."/>
            <person name="Oliver K."/>
            <person name="Scott C.E."/>
            <person name="Ainscough R."/>
            <person name="Almeida J.P."/>
            <person name="Ambrose K.D."/>
            <person name="Andrews D.T."/>
            <person name="Ashwell R.I.S."/>
            <person name="Babbage A.K."/>
            <person name="Bagguley C.L."/>
            <person name="Bailey J."/>
            <person name="Bannerjee R."/>
            <person name="Barlow K.F."/>
            <person name="Bates K."/>
            <person name="Beasley H."/>
            <person name="Bird C.P."/>
            <person name="Bray-Allen S."/>
            <person name="Brown A.J."/>
            <person name="Brown J.Y."/>
            <person name="Burrill W."/>
            <person name="Carder C."/>
            <person name="Carter N.P."/>
            <person name="Chapman J.C."/>
            <person name="Clamp M.E."/>
            <person name="Clark S.Y."/>
            <person name="Clarke G."/>
            <person name="Clee C.M."/>
            <person name="Clegg S.C."/>
            <person name="Cobley V."/>
            <person name="Collins J.E."/>
            <person name="Corby N."/>
            <person name="Coville G.J."/>
            <person name="Deloukas P."/>
            <person name="Dhami P."/>
            <person name="Dunham I."/>
            <person name="Dunn M."/>
            <person name="Earthrowl M.E."/>
            <person name="Ellington A.G."/>
            <person name="Faulkner L."/>
            <person name="Frankish A.G."/>
            <person name="Frankland J."/>
            <person name="French L."/>
            <person name="Garner P."/>
            <person name="Garnett J."/>
            <person name="Gilbert J.G.R."/>
            <person name="Gilson C.J."/>
            <person name="Ghori J."/>
            <person name="Grafham D.V."/>
            <person name="Gribble S.M."/>
            <person name="Griffiths C."/>
            <person name="Hall R.E."/>
            <person name="Hammond S."/>
            <person name="Harley J.L."/>
            <person name="Hart E.A."/>
            <person name="Heath P.D."/>
            <person name="Howden P.J."/>
            <person name="Huckle E.J."/>
            <person name="Hunt P.J."/>
            <person name="Hunt A.R."/>
            <person name="Johnson C."/>
            <person name="Johnson D."/>
            <person name="Kay M."/>
            <person name="Kimberley A.M."/>
            <person name="King A."/>
            <person name="Laird G.K."/>
            <person name="Langford C.J."/>
            <person name="Lawlor S."/>
            <person name="Leongamornlert D.A."/>
            <person name="Lloyd D.M."/>
            <person name="Lloyd C."/>
            <person name="Loveland J.E."/>
            <person name="Lovell J."/>
            <person name="Martin S."/>
            <person name="Mashreghi-Mohammadi M."/>
            <person name="McLaren S.J."/>
            <person name="McMurray A."/>
            <person name="Milne S."/>
            <person name="Moore M.J.F."/>
            <person name="Nickerson T."/>
            <person name="Palmer S.A."/>
            <person name="Pearce A.V."/>
            <person name="Peck A.I."/>
            <person name="Pelan S."/>
            <person name="Phillimore B."/>
            <person name="Porter K.M."/>
            <person name="Rice C.M."/>
            <person name="Searle S."/>
            <person name="Sehra H.K."/>
            <person name="Shownkeen R."/>
            <person name="Skuce C.D."/>
            <person name="Smith M."/>
            <person name="Steward C.A."/>
            <person name="Sycamore N."/>
            <person name="Tester J."/>
            <person name="Thomas D.W."/>
            <person name="Tracey A."/>
            <person name="Tromans A."/>
            <person name="Tubby B."/>
            <person name="Wall M."/>
            <person name="Wallis J.M."/>
            <person name="West A.P."/>
            <person name="Whitehead S.L."/>
            <person name="Willey D.L."/>
            <person name="Wilming L."/>
            <person name="Wray P.W."/>
            <person name="Wright M.W."/>
            <person name="Young L."/>
            <person name="Coulson A."/>
            <person name="Durbin R.M."/>
            <person name="Hubbard T."/>
            <person name="Sulston J.E."/>
            <person name="Beck S."/>
            <person name="Bentley D.R."/>
            <person name="Rogers J."/>
            <person name="Ross M.T."/>
        </authorList>
    </citation>
    <scope>NUCLEOTIDE SEQUENCE [LARGE SCALE GENOMIC DNA]</scope>
</reference>
<reference key="3">
    <citation type="journal article" date="2004" name="Genome Res.">
        <title>The status, quality, and expansion of the NIH full-length cDNA project: the Mammalian Gene Collection (MGC).</title>
        <authorList>
            <consortium name="The MGC Project Team"/>
        </authorList>
    </citation>
    <scope>NUCLEOTIDE SEQUENCE [LARGE SCALE MRNA] (ISOFORMS 1 AND 3)</scope>
    <source>
        <tissue>Ovary</tissue>
        <tissue>Testis</tissue>
    </source>
</reference>
<evidence type="ECO:0000256" key="1">
    <source>
        <dbReference type="SAM" id="MobiDB-lite"/>
    </source>
</evidence>
<evidence type="ECO:0000303" key="2">
    <source>
    </source>
</evidence>
<evidence type="ECO:0000303" key="3">
    <source>
    </source>
</evidence>
<evidence type="ECO:0000305" key="4"/>
<accession>Q86V42</accession>
<accession>A2A324</accession>
<accession>Q8N8P9</accession>
<accession>Q8NE66</accession>
<accession>Q96NJ9</accession>
<organism>
    <name type="scientific">Homo sapiens</name>
    <name type="common">Human</name>
    <dbReference type="NCBI Taxonomy" id="9606"/>
    <lineage>
        <taxon>Eukaryota</taxon>
        <taxon>Metazoa</taxon>
        <taxon>Chordata</taxon>
        <taxon>Craniata</taxon>
        <taxon>Vertebrata</taxon>
        <taxon>Euteleostomi</taxon>
        <taxon>Mammalia</taxon>
        <taxon>Eutheria</taxon>
        <taxon>Euarchontoglires</taxon>
        <taxon>Primates</taxon>
        <taxon>Haplorrhini</taxon>
        <taxon>Catarrhini</taxon>
        <taxon>Hominidae</taxon>
        <taxon>Homo</taxon>
    </lineage>
</organism>
<keyword id="KW-0025">Alternative splicing</keyword>
<keyword id="KW-1267">Proteomics identification</keyword>
<keyword id="KW-1185">Reference proteome</keyword>